<gene>
    <name evidence="1" type="primary">mnmA</name>
    <name type="ordered locus">BMA2364</name>
</gene>
<sequence length="383" mass="41858">MTKRRVVVGMSGGVDSSVTAWLLKEQGYDVVGLFMKNWEDDDDGEYCSTRQDWIDVVSVADLIGIDVEAVNFAAEYKDRVFAEFLREYSAGRTPNPDVLCNAEIKFKAFLDHAMSLGAQTIATGHYARVRERDGRFELLKAFDHTKDQSYFLHRLNQAQLSKTMFPLGEIPKTRVREIAAQIGLPNAKKKDSTGICFIGERPFRDFLNRYLPTKPGPMKTPDGKTVGEHIGLAFYTFGQRKGIGLGGSKDGSGEPWFVAVKDIASNTLYVVQGHDHPWLRSRELVAGNVSWVAGEPPADGARCGAKTRYRQADAPCAFGRAAQAGDERFSLVFDEPQWAVTPGQSAVLYDGDVCLGGGIIESAATGRAGTAPAGRAPALVEAR</sequence>
<protein>
    <recommendedName>
        <fullName evidence="1">tRNA-specific 2-thiouridylase MnmA</fullName>
        <ecNumber evidence="1">2.8.1.13</ecNumber>
    </recommendedName>
</protein>
<feature type="chain" id="PRO_0000349553" description="tRNA-specific 2-thiouridylase MnmA">
    <location>
        <begin position="1"/>
        <end position="383"/>
    </location>
</feature>
<feature type="region of interest" description="Interaction with target base in tRNA" evidence="1">
    <location>
        <begin position="95"/>
        <end position="97"/>
    </location>
</feature>
<feature type="region of interest" description="Interaction with tRNA" evidence="1">
    <location>
        <begin position="146"/>
        <end position="148"/>
    </location>
</feature>
<feature type="region of interest" description="Interaction with tRNA" evidence="1">
    <location>
        <begin position="308"/>
        <end position="309"/>
    </location>
</feature>
<feature type="active site" description="Nucleophile" evidence="1">
    <location>
        <position position="100"/>
    </location>
</feature>
<feature type="active site" description="Cysteine persulfide intermediate" evidence="1">
    <location>
        <position position="196"/>
    </location>
</feature>
<feature type="binding site" evidence="1">
    <location>
        <begin position="9"/>
        <end position="16"/>
    </location>
    <ligand>
        <name>ATP</name>
        <dbReference type="ChEBI" id="CHEBI:30616"/>
    </ligand>
</feature>
<feature type="binding site" evidence="1">
    <location>
        <position position="35"/>
    </location>
    <ligand>
        <name>ATP</name>
        <dbReference type="ChEBI" id="CHEBI:30616"/>
    </ligand>
</feature>
<feature type="binding site" evidence="1">
    <location>
        <position position="124"/>
    </location>
    <ligand>
        <name>ATP</name>
        <dbReference type="ChEBI" id="CHEBI:30616"/>
    </ligand>
</feature>
<feature type="site" description="Interaction with tRNA" evidence="1">
    <location>
        <position position="125"/>
    </location>
</feature>
<feature type="site" description="Interaction with tRNA" evidence="1">
    <location>
        <position position="344"/>
    </location>
</feature>
<feature type="disulfide bond" description="Alternate" evidence="1">
    <location>
        <begin position="100"/>
        <end position="196"/>
    </location>
</feature>
<name>MNMA_BURMA</name>
<proteinExistence type="inferred from homology"/>
<accession>Q62H98</accession>
<evidence type="ECO:0000255" key="1">
    <source>
        <dbReference type="HAMAP-Rule" id="MF_00144"/>
    </source>
</evidence>
<dbReference type="EC" id="2.8.1.13" evidence="1"/>
<dbReference type="EMBL" id="CP000010">
    <property type="protein sequence ID" value="AAU50205.1"/>
    <property type="molecule type" value="Genomic_DNA"/>
</dbReference>
<dbReference type="RefSeq" id="WP_004194365.1">
    <property type="nucleotide sequence ID" value="NC_006348.1"/>
</dbReference>
<dbReference type="RefSeq" id="YP_103922.1">
    <property type="nucleotide sequence ID" value="NC_006348.1"/>
</dbReference>
<dbReference type="SMR" id="Q62H98"/>
<dbReference type="GeneID" id="92980058"/>
<dbReference type="KEGG" id="bma:BMA2364"/>
<dbReference type="PATRIC" id="fig|243160.12.peg.2436"/>
<dbReference type="eggNOG" id="COG0482">
    <property type="taxonomic scope" value="Bacteria"/>
</dbReference>
<dbReference type="HOGENOM" id="CLU_035188_1_0_4"/>
<dbReference type="Proteomes" id="UP000006693">
    <property type="component" value="Chromosome 1"/>
</dbReference>
<dbReference type="GO" id="GO:0005737">
    <property type="term" value="C:cytoplasm"/>
    <property type="evidence" value="ECO:0007669"/>
    <property type="project" value="UniProtKB-SubCell"/>
</dbReference>
<dbReference type="GO" id="GO:0005524">
    <property type="term" value="F:ATP binding"/>
    <property type="evidence" value="ECO:0007669"/>
    <property type="project" value="UniProtKB-KW"/>
</dbReference>
<dbReference type="GO" id="GO:0000049">
    <property type="term" value="F:tRNA binding"/>
    <property type="evidence" value="ECO:0007669"/>
    <property type="project" value="UniProtKB-KW"/>
</dbReference>
<dbReference type="GO" id="GO:0103016">
    <property type="term" value="F:tRNA-uridine 2-sulfurtransferase activity"/>
    <property type="evidence" value="ECO:0007669"/>
    <property type="project" value="UniProtKB-EC"/>
</dbReference>
<dbReference type="GO" id="GO:0002143">
    <property type="term" value="P:tRNA wobble position uridine thiolation"/>
    <property type="evidence" value="ECO:0007669"/>
    <property type="project" value="TreeGrafter"/>
</dbReference>
<dbReference type="CDD" id="cd01998">
    <property type="entry name" value="MnmA_TRMU-like"/>
    <property type="match status" value="1"/>
</dbReference>
<dbReference type="FunFam" id="2.30.30.280:FF:000001">
    <property type="entry name" value="tRNA-specific 2-thiouridylase MnmA"/>
    <property type="match status" value="1"/>
</dbReference>
<dbReference type="FunFam" id="2.40.30.10:FF:000023">
    <property type="entry name" value="tRNA-specific 2-thiouridylase MnmA"/>
    <property type="match status" value="1"/>
</dbReference>
<dbReference type="FunFam" id="3.40.50.620:FF:000004">
    <property type="entry name" value="tRNA-specific 2-thiouridylase MnmA"/>
    <property type="match status" value="1"/>
</dbReference>
<dbReference type="Gene3D" id="2.30.30.280">
    <property type="entry name" value="Adenine nucleotide alpha hydrolases-like domains"/>
    <property type="match status" value="1"/>
</dbReference>
<dbReference type="Gene3D" id="3.40.50.620">
    <property type="entry name" value="HUPs"/>
    <property type="match status" value="1"/>
</dbReference>
<dbReference type="Gene3D" id="2.40.30.10">
    <property type="entry name" value="Translation factors"/>
    <property type="match status" value="1"/>
</dbReference>
<dbReference type="HAMAP" id="MF_00144">
    <property type="entry name" value="tRNA_thiouridyl_MnmA"/>
    <property type="match status" value="1"/>
</dbReference>
<dbReference type="InterPro" id="IPR004506">
    <property type="entry name" value="MnmA-like"/>
</dbReference>
<dbReference type="InterPro" id="IPR046885">
    <property type="entry name" value="MnmA-like_C"/>
</dbReference>
<dbReference type="InterPro" id="IPR046884">
    <property type="entry name" value="MnmA-like_central"/>
</dbReference>
<dbReference type="InterPro" id="IPR023382">
    <property type="entry name" value="MnmA-like_central_sf"/>
</dbReference>
<dbReference type="InterPro" id="IPR014729">
    <property type="entry name" value="Rossmann-like_a/b/a_fold"/>
</dbReference>
<dbReference type="NCBIfam" id="NF001138">
    <property type="entry name" value="PRK00143.1"/>
    <property type="match status" value="1"/>
</dbReference>
<dbReference type="NCBIfam" id="TIGR00420">
    <property type="entry name" value="trmU"/>
    <property type="match status" value="1"/>
</dbReference>
<dbReference type="PANTHER" id="PTHR11933:SF5">
    <property type="entry name" value="MITOCHONDRIAL TRNA-SPECIFIC 2-THIOURIDYLASE 1"/>
    <property type="match status" value="1"/>
</dbReference>
<dbReference type="PANTHER" id="PTHR11933">
    <property type="entry name" value="TRNA 5-METHYLAMINOMETHYL-2-THIOURIDYLATE -METHYLTRANSFERASE"/>
    <property type="match status" value="1"/>
</dbReference>
<dbReference type="Pfam" id="PF03054">
    <property type="entry name" value="tRNA_Me_trans"/>
    <property type="match status" value="1"/>
</dbReference>
<dbReference type="Pfam" id="PF20258">
    <property type="entry name" value="tRNA_Me_trans_C"/>
    <property type="match status" value="1"/>
</dbReference>
<dbReference type="Pfam" id="PF20259">
    <property type="entry name" value="tRNA_Me_trans_M"/>
    <property type="match status" value="1"/>
</dbReference>
<dbReference type="SUPFAM" id="SSF52402">
    <property type="entry name" value="Adenine nucleotide alpha hydrolases-like"/>
    <property type="match status" value="1"/>
</dbReference>
<organism>
    <name type="scientific">Burkholderia mallei (strain ATCC 23344)</name>
    <dbReference type="NCBI Taxonomy" id="243160"/>
    <lineage>
        <taxon>Bacteria</taxon>
        <taxon>Pseudomonadati</taxon>
        <taxon>Pseudomonadota</taxon>
        <taxon>Betaproteobacteria</taxon>
        <taxon>Burkholderiales</taxon>
        <taxon>Burkholderiaceae</taxon>
        <taxon>Burkholderia</taxon>
        <taxon>pseudomallei group</taxon>
    </lineage>
</organism>
<comment type="function">
    <text evidence="1">Catalyzes the 2-thiolation of uridine at the wobble position (U34) of tRNA, leading to the formation of s(2)U34.</text>
</comment>
<comment type="catalytic activity">
    <reaction evidence="1">
        <text>S-sulfanyl-L-cysteinyl-[protein] + uridine(34) in tRNA + AH2 + ATP = 2-thiouridine(34) in tRNA + L-cysteinyl-[protein] + A + AMP + diphosphate + H(+)</text>
        <dbReference type="Rhea" id="RHEA:47032"/>
        <dbReference type="Rhea" id="RHEA-COMP:10131"/>
        <dbReference type="Rhea" id="RHEA-COMP:11726"/>
        <dbReference type="Rhea" id="RHEA-COMP:11727"/>
        <dbReference type="Rhea" id="RHEA-COMP:11728"/>
        <dbReference type="ChEBI" id="CHEBI:13193"/>
        <dbReference type="ChEBI" id="CHEBI:15378"/>
        <dbReference type="ChEBI" id="CHEBI:17499"/>
        <dbReference type="ChEBI" id="CHEBI:29950"/>
        <dbReference type="ChEBI" id="CHEBI:30616"/>
        <dbReference type="ChEBI" id="CHEBI:33019"/>
        <dbReference type="ChEBI" id="CHEBI:61963"/>
        <dbReference type="ChEBI" id="CHEBI:65315"/>
        <dbReference type="ChEBI" id="CHEBI:87170"/>
        <dbReference type="ChEBI" id="CHEBI:456215"/>
        <dbReference type="EC" id="2.8.1.13"/>
    </reaction>
</comment>
<comment type="subcellular location">
    <subcellularLocation>
        <location evidence="1">Cytoplasm</location>
    </subcellularLocation>
</comment>
<comment type="similarity">
    <text evidence="1">Belongs to the MnmA/TRMU family.</text>
</comment>
<reference key="1">
    <citation type="journal article" date="2004" name="Proc. Natl. Acad. Sci. U.S.A.">
        <title>Structural flexibility in the Burkholderia mallei genome.</title>
        <authorList>
            <person name="Nierman W.C."/>
            <person name="DeShazer D."/>
            <person name="Kim H.S."/>
            <person name="Tettelin H."/>
            <person name="Nelson K.E."/>
            <person name="Feldblyum T.V."/>
            <person name="Ulrich R.L."/>
            <person name="Ronning C.M."/>
            <person name="Brinkac L.M."/>
            <person name="Daugherty S.C."/>
            <person name="Davidsen T.D."/>
            <person name="DeBoy R.T."/>
            <person name="Dimitrov G."/>
            <person name="Dodson R.J."/>
            <person name="Durkin A.S."/>
            <person name="Gwinn M.L."/>
            <person name="Haft D.H."/>
            <person name="Khouri H.M."/>
            <person name="Kolonay J.F."/>
            <person name="Madupu R."/>
            <person name="Mohammoud Y."/>
            <person name="Nelson W.C."/>
            <person name="Radune D."/>
            <person name="Romero C.M."/>
            <person name="Sarria S."/>
            <person name="Selengut J."/>
            <person name="Shamblin C."/>
            <person name="Sullivan S.A."/>
            <person name="White O."/>
            <person name="Yu Y."/>
            <person name="Zafar N."/>
            <person name="Zhou L."/>
            <person name="Fraser C.M."/>
        </authorList>
    </citation>
    <scope>NUCLEOTIDE SEQUENCE [LARGE SCALE GENOMIC DNA]</scope>
    <source>
        <strain>ATCC 23344</strain>
    </source>
</reference>
<keyword id="KW-0067">ATP-binding</keyword>
<keyword id="KW-0963">Cytoplasm</keyword>
<keyword id="KW-1015">Disulfide bond</keyword>
<keyword id="KW-0547">Nucleotide-binding</keyword>
<keyword id="KW-1185">Reference proteome</keyword>
<keyword id="KW-0694">RNA-binding</keyword>
<keyword id="KW-0808">Transferase</keyword>
<keyword id="KW-0819">tRNA processing</keyword>
<keyword id="KW-0820">tRNA-binding</keyword>